<name>CPTP_MOUSE</name>
<reference key="1">
    <citation type="journal article" date="2005" name="Science">
        <title>The transcriptional landscape of the mammalian genome.</title>
        <authorList>
            <person name="Carninci P."/>
            <person name="Kasukawa T."/>
            <person name="Katayama S."/>
            <person name="Gough J."/>
            <person name="Frith M.C."/>
            <person name="Maeda N."/>
            <person name="Oyama R."/>
            <person name="Ravasi T."/>
            <person name="Lenhard B."/>
            <person name="Wells C."/>
            <person name="Kodzius R."/>
            <person name="Shimokawa K."/>
            <person name="Bajic V.B."/>
            <person name="Brenner S.E."/>
            <person name="Batalov S."/>
            <person name="Forrest A.R."/>
            <person name="Zavolan M."/>
            <person name="Davis M.J."/>
            <person name="Wilming L.G."/>
            <person name="Aidinis V."/>
            <person name="Allen J.E."/>
            <person name="Ambesi-Impiombato A."/>
            <person name="Apweiler R."/>
            <person name="Aturaliya R.N."/>
            <person name="Bailey T.L."/>
            <person name="Bansal M."/>
            <person name="Baxter L."/>
            <person name="Beisel K.W."/>
            <person name="Bersano T."/>
            <person name="Bono H."/>
            <person name="Chalk A.M."/>
            <person name="Chiu K.P."/>
            <person name="Choudhary V."/>
            <person name="Christoffels A."/>
            <person name="Clutterbuck D.R."/>
            <person name="Crowe M.L."/>
            <person name="Dalla E."/>
            <person name="Dalrymple B.P."/>
            <person name="de Bono B."/>
            <person name="Della Gatta G."/>
            <person name="di Bernardo D."/>
            <person name="Down T."/>
            <person name="Engstrom P."/>
            <person name="Fagiolini M."/>
            <person name="Faulkner G."/>
            <person name="Fletcher C.F."/>
            <person name="Fukushima T."/>
            <person name="Furuno M."/>
            <person name="Futaki S."/>
            <person name="Gariboldi M."/>
            <person name="Georgii-Hemming P."/>
            <person name="Gingeras T.R."/>
            <person name="Gojobori T."/>
            <person name="Green R.E."/>
            <person name="Gustincich S."/>
            <person name="Harbers M."/>
            <person name="Hayashi Y."/>
            <person name="Hensch T.K."/>
            <person name="Hirokawa N."/>
            <person name="Hill D."/>
            <person name="Huminiecki L."/>
            <person name="Iacono M."/>
            <person name="Ikeo K."/>
            <person name="Iwama A."/>
            <person name="Ishikawa T."/>
            <person name="Jakt M."/>
            <person name="Kanapin A."/>
            <person name="Katoh M."/>
            <person name="Kawasawa Y."/>
            <person name="Kelso J."/>
            <person name="Kitamura H."/>
            <person name="Kitano H."/>
            <person name="Kollias G."/>
            <person name="Krishnan S.P."/>
            <person name="Kruger A."/>
            <person name="Kummerfeld S.K."/>
            <person name="Kurochkin I.V."/>
            <person name="Lareau L.F."/>
            <person name="Lazarevic D."/>
            <person name="Lipovich L."/>
            <person name="Liu J."/>
            <person name="Liuni S."/>
            <person name="McWilliam S."/>
            <person name="Madan Babu M."/>
            <person name="Madera M."/>
            <person name="Marchionni L."/>
            <person name="Matsuda H."/>
            <person name="Matsuzawa S."/>
            <person name="Miki H."/>
            <person name="Mignone F."/>
            <person name="Miyake S."/>
            <person name="Morris K."/>
            <person name="Mottagui-Tabar S."/>
            <person name="Mulder N."/>
            <person name="Nakano N."/>
            <person name="Nakauchi H."/>
            <person name="Ng P."/>
            <person name="Nilsson R."/>
            <person name="Nishiguchi S."/>
            <person name="Nishikawa S."/>
            <person name="Nori F."/>
            <person name="Ohara O."/>
            <person name="Okazaki Y."/>
            <person name="Orlando V."/>
            <person name="Pang K.C."/>
            <person name="Pavan W.J."/>
            <person name="Pavesi G."/>
            <person name="Pesole G."/>
            <person name="Petrovsky N."/>
            <person name="Piazza S."/>
            <person name="Reed J."/>
            <person name="Reid J.F."/>
            <person name="Ring B.Z."/>
            <person name="Ringwald M."/>
            <person name="Rost B."/>
            <person name="Ruan Y."/>
            <person name="Salzberg S.L."/>
            <person name="Sandelin A."/>
            <person name="Schneider C."/>
            <person name="Schoenbach C."/>
            <person name="Sekiguchi K."/>
            <person name="Semple C.A."/>
            <person name="Seno S."/>
            <person name="Sessa L."/>
            <person name="Sheng Y."/>
            <person name="Shibata Y."/>
            <person name="Shimada H."/>
            <person name="Shimada K."/>
            <person name="Silva D."/>
            <person name="Sinclair B."/>
            <person name="Sperling S."/>
            <person name="Stupka E."/>
            <person name="Sugiura K."/>
            <person name="Sultana R."/>
            <person name="Takenaka Y."/>
            <person name="Taki K."/>
            <person name="Tammoja K."/>
            <person name="Tan S.L."/>
            <person name="Tang S."/>
            <person name="Taylor M.S."/>
            <person name="Tegner J."/>
            <person name="Teichmann S.A."/>
            <person name="Ueda H.R."/>
            <person name="van Nimwegen E."/>
            <person name="Verardo R."/>
            <person name="Wei C.L."/>
            <person name="Yagi K."/>
            <person name="Yamanishi H."/>
            <person name="Zabarovsky E."/>
            <person name="Zhu S."/>
            <person name="Zimmer A."/>
            <person name="Hide W."/>
            <person name="Bult C."/>
            <person name="Grimmond S.M."/>
            <person name="Teasdale R.D."/>
            <person name="Liu E.T."/>
            <person name="Brusic V."/>
            <person name="Quackenbush J."/>
            <person name="Wahlestedt C."/>
            <person name="Mattick J.S."/>
            <person name="Hume D.A."/>
            <person name="Kai C."/>
            <person name="Sasaki D."/>
            <person name="Tomaru Y."/>
            <person name="Fukuda S."/>
            <person name="Kanamori-Katayama M."/>
            <person name="Suzuki M."/>
            <person name="Aoki J."/>
            <person name="Arakawa T."/>
            <person name="Iida J."/>
            <person name="Imamura K."/>
            <person name="Itoh M."/>
            <person name="Kato T."/>
            <person name="Kawaji H."/>
            <person name="Kawagashira N."/>
            <person name="Kawashima T."/>
            <person name="Kojima M."/>
            <person name="Kondo S."/>
            <person name="Konno H."/>
            <person name="Nakano K."/>
            <person name="Ninomiya N."/>
            <person name="Nishio T."/>
            <person name="Okada M."/>
            <person name="Plessy C."/>
            <person name="Shibata K."/>
            <person name="Shiraki T."/>
            <person name="Suzuki S."/>
            <person name="Tagami M."/>
            <person name="Waki K."/>
            <person name="Watahiki A."/>
            <person name="Okamura-Oho Y."/>
            <person name="Suzuki H."/>
            <person name="Kawai J."/>
            <person name="Hayashizaki Y."/>
        </authorList>
    </citation>
    <scope>NUCLEOTIDE SEQUENCE [LARGE SCALE MRNA]</scope>
    <source>
        <strain>C57BL/6J</strain>
    </source>
</reference>
<reference key="2">
    <citation type="journal article" date="2009" name="PLoS Biol.">
        <title>Lineage-specific biology revealed by a finished genome assembly of the mouse.</title>
        <authorList>
            <person name="Church D.M."/>
            <person name="Goodstadt L."/>
            <person name="Hillier L.W."/>
            <person name="Zody M.C."/>
            <person name="Goldstein S."/>
            <person name="She X."/>
            <person name="Bult C.J."/>
            <person name="Agarwala R."/>
            <person name="Cherry J.L."/>
            <person name="DiCuccio M."/>
            <person name="Hlavina W."/>
            <person name="Kapustin Y."/>
            <person name="Meric P."/>
            <person name="Maglott D."/>
            <person name="Birtle Z."/>
            <person name="Marques A.C."/>
            <person name="Graves T."/>
            <person name="Zhou S."/>
            <person name="Teague B."/>
            <person name="Potamousis K."/>
            <person name="Churas C."/>
            <person name="Place M."/>
            <person name="Herschleb J."/>
            <person name="Runnheim R."/>
            <person name="Forrest D."/>
            <person name="Amos-Landgraf J."/>
            <person name="Schwartz D.C."/>
            <person name="Cheng Z."/>
            <person name="Lindblad-Toh K."/>
            <person name="Eichler E.E."/>
            <person name="Ponting C.P."/>
        </authorList>
    </citation>
    <scope>NUCLEOTIDE SEQUENCE [LARGE SCALE GENOMIC DNA]</scope>
    <source>
        <strain>C57BL/6J</strain>
    </source>
</reference>
<reference key="3">
    <citation type="journal article" date="2004" name="Genome Res.">
        <title>The status, quality, and expansion of the NIH full-length cDNA project: the Mammalian Gene Collection (MGC).</title>
        <authorList>
            <consortium name="The MGC Project Team"/>
        </authorList>
    </citation>
    <scope>NUCLEOTIDE SEQUENCE [LARGE SCALE MRNA]</scope>
    <source>
        <strain>FVB/N</strain>
        <tissue>Mammary tumor</tissue>
    </source>
</reference>
<reference key="4">
    <citation type="journal article" date="2010" name="Cell">
        <title>A tissue-specific atlas of mouse protein phosphorylation and expression.</title>
        <authorList>
            <person name="Huttlin E.L."/>
            <person name="Jedrychowski M.P."/>
            <person name="Elias J.E."/>
            <person name="Goswami T."/>
            <person name="Rad R."/>
            <person name="Beausoleil S.A."/>
            <person name="Villen J."/>
            <person name="Haas W."/>
            <person name="Sowa M.E."/>
            <person name="Gygi S.P."/>
        </authorList>
    </citation>
    <scope>IDENTIFICATION BY MASS SPECTROMETRY [LARGE SCALE ANALYSIS]</scope>
    <source>
        <tissue>Brain</tissue>
        <tissue>Brown adipose tissue</tissue>
        <tissue>Kidney</tissue>
        <tissue>Liver</tissue>
        <tissue>Lung</tissue>
        <tissue>Spleen</tissue>
    </source>
</reference>
<reference key="5">
    <citation type="journal article" date="2018" name="Autophagy">
        <title>CPTP: A sphingolipid transfer protein that regulates autophagy and inflammasome activation.</title>
        <authorList>
            <person name="Mishra S.K."/>
            <person name="Gao Y.G."/>
            <person name="Deng Y."/>
            <person name="Chalfant C.E."/>
            <person name="Hinchcliffe E.H."/>
            <person name="Brown R.E."/>
        </authorList>
    </citation>
    <scope>FUNCTION</scope>
</reference>
<reference key="6">
    <citation type="journal article" date="2013" name="Nature">
        <title>Non-vesicular trafficking by a ceramide-1-phosphate transfer protein regulates eicosanoids.</title>
        <authorList>
            <person name="Simanshu D.K."/>
            <person name="Kamlekar R.K."/>
            <person name="Wijesinghe D.S."/>
            <person name="Zou X."/>
            <person name="Zhai X."/>
            <person name="Mishra S.K."/>
            <person name="Molotkovsky J.G."/>
            <person name="Malinina L."/>
            <person name="Hinchcliffe E.H."/>
            <person name="Chalfant C.E."/>
            <person name="Brown R.E."/>
            <person name="Patel D.J."/>
        </authorList>
    </citation>
    <scope>X-RAY CRYSTALLOGRAPHY (2.55 ANGSTROMS)</scope>
</reference>
<keyword id="KW-0002">3D-structure</keyword>
<keyword id="KW-1003">Cell membrane</keyword>
<keyword id="KW-0963">Cytoplasm</keyword>
<keyword id="KW-0967">Endosome</keyword>
<keyword id="KW-0333">Golgi apparatus</keyword>
<keyword id="KW-0445">Lipid transport</keyword>
<keyword id="KW-0446">Lipid-binding</keyword>
<keyword id="KW-0472">Membrane</keyword>
<keyword id="KW-0539">Nucleus</keyword>
<keyword id="KW-1185">Reference proteome</keyword>
<keyword id="KW-0813">Transport</keyword>
<accession>Q8BS40</accession>
<accession>A2ADA2</accession>
<accession>Q99LU9</accession>
<comment type="function">
    <text evidence="1 2">Mediates the intracellular transfer of ceramide-1-phosphate (C1P) between organelle membranes and the cell membrane. Required for normal structure of the Golgi stacks. Can bind phosphoceramides with a variety of aliphatic chains, but has a preference for lipids with saturated C16:0 or monounsaturated C18:1 aliphatic chains, and is inefficient with phosphoceramides containing lignoceryl (C24:0). Plays a role in the regulation of the cellular levels of ceramide-1-phosphate, and thereby contributes to the regulation of phospholipase PLA2G4A activity and the release of arachidonic acid. Has no activity with galactosylceramide, lactosylceramide, sphingomyelin, phosphatidylcholine, phosphatidic acid and ceramide. C1P transfer is stimulated by phosphatidylserine in C1P source vesicles (By similarity). Regulates autophagy, inflammasome mediated IL1B and IL18 processing, and pyroptosis, but not apoptosis (PubMed:29164996).</text>
</comment>
<comment type="catalytic activity">
    <reaction evidence="1">
        <text>N-(hexadecanoyl)-sphing-4-enine-1-phosphate(in) = N-(hexadecanoyl)-sphing-4-enine-1-phosphate(out)</text>
        <dbReference type="Rhea" id="RHEA:45680"/>
        <dbReference type="ChEBI" id="CHEBI:72963"/>
    </reaction>
    <physiologicalReaction direction="left-to-right" evidence="1">
        <dbReference type="Rhea" id="RHEA:45681"/>
    </physiologicalReaction>
</comment>
<comment type="catalytic activity">
    <reaction evidence="1">
        <text>N-(9Z-octadecenoyl)-sphing-4-enine-1-phosphate(in) = N-(9Z-octadecenoyl)-sphing-4-enine-1-phosphate(out)</text>
        <dbReference type="Rhea" id="RHEA:45688"/>
        <dbReference type="ChEBI" id="CHEBI:85378"/>
    </reaction>
    <physiologicalReaction direction="left-to-right" evidence="1">
        <dbReference type="Rhea" id="RHEA:45689"/>
    </physiologicalReaction>
</comment>
<comment type="subcellular location">
    <subcellularLocation>
        <location evidence="1">Cytoplasm</location>
        <location evidence="1">Cytosol</location>
    </subcellularLocation>
    <subcellularLocation>
        <location evidence="1">Golgi apparatus</location>
        <location evidence="1">trans-Golgi network membrane</location>
        <topology evidence="1">Peripheral membrane protein</topology>
    </subcellularLocation>
    <subcellularLocation>
        <location evidence="1">Cell membrane</location>
        <topology evidence="1">Peripheral membrane protein</topology>
        <orientation evidence="1">Cytoplasmic side</orientation>
    </subcellularLocation>
    <subcellularLocation>
        <location evidence="1">Endosome membrane</location>
        <topology evidence="1">Peripheral membrane protein</topology>
    </subcellularLocation>
    <subcellularLocation>
        <location evidence="1">Nucleus outer membrane</location>
        <topology evidence="1">Peripheral membrane protein</topology>
    </subcellularLocation>
</comment>
<comment type="similarity">
    <text evidence="3">Belongs to the GLTP family.</text>
</comment>
<evidence type="ECO:0000250" key="1">
    <source>
        <dbReference type="UniProtKB" id="Q5TA50"/>
    </source>
</evidence>
<evidence type="ECO:0000269" key="2">
    <source>
    </source>
</evidence>
<evidence type="ECO:0000305" key="3"/>
<evidence type="ECO:0000312" key="4">
    <source>
        <dbReference type="MGI" id="MGI:1933107"/>
    </source>
</evidence>
<evidence type="ECO:0007829" key="5">
    <source>
        <dbReference type="PDB" id="4KBR"/>
    </source>
</evidence>
<gene>
    <name evidence="4" type="primary">Cptp</name>
    <name evidence="4" type="synonym">Gltpd1</name>
</gene>
<organism>
    <name type="scientific">Mus musculus</name>
    <name type="common">Mouse</name>
    <dbReference type="NCBI Taxonomy" id="10090"/>
    <lineage>
        <taxon>Eukaryota</taxon>
        <taxon>Metazoa</taxon>
        <taxon>Chordata</taxon>
        <taxon>Craniata</taxon>
        <taxon>Vertebrata</taxon>
        <taxon>Euteleostomi</taxon>
        <taxon>Mammalia</taxon>
        <taxon>Eutheria</taxon>
        <taxon>Euarchontoglires</taxon>
        <taxon>Glires</taxon>
        <taxon>Rodentia</taxon>
        <taxon>Myomorpha</taxon>
        <taxon>Muroidea</taxon>
        <taxon>Muridae</taxon>
        <taxon>Murinae</taxon>
        <taxon>Mus</taxon>
        <taxon>Mus</taxon>
    </lineage>
</organism>
<feature type="chain" id="PRO_0000317157" description="Ceramide-1-phosphate transfer protein">
    <location>
        <begin position="1"/>
        <end position="216"/>
    </location>
</feature>
<feature type="binding site" evidence="1">
    <location>
        <position position="56"/>
    </location>
    <ligand>
        <name>an N-acylsphingoid base 1-phosphate</name>
        <dbReference type="ChEBI" id="CHEBI:84404"/>
    </ligand>
</feature>
<feature type="binding site" evidence="1">
    <location>
        <position position="60"/>
    </location>
    <ligand>
        <name>an N-acylsphingoid base 1-phosphate</name>
        <dbReference type="ChEBI" id="CHEBI:84404"/>
    </ligand>
</feature>
<feature type="binding site" evidence="1">
    <location>
        <position position="108"/>
    </location>
    <ligand>
        <name>an N-acylsphingoid base 1-phosphate</name>
        <dbReference type="ChEBI" id="CHEBI:84404"/>
    </ligand>
</feature>
<feature type="binding site" evidence="1">
    <location>
        <position position="112"/>
    </location>
    <ligand>
        <name>an N-acylsphingoid base 1-phosphate</name>
        <dbReference type="ChEBI" id="CHEBI:84404"/>
    </ligand>
</feature>
<feature type="binding site" evidence="1">
    <location>
        <position position="152"/>
    </location>
    <ligand>
        <name>an N-acylsphingoid base 1-phosphate</name>
        <dbReference type="ChEBI" id="CHEBI:84404"/>
    </ligand>
</feature>
<feature type="sequence conflict" description="In Ref. 3; AAH02216." evidence="3" ref="3">
    <original>A</original>
    <variation>T</variation>
    <location>
        <position position="77"/>
    </location>
</feature>
<feature type="helix" evidence="5">
    <location>
        <begin position="10"/>
        <end position="19"/>
    </location>
</feature>
<feature type="helix" evidence="5">
    <location>
        <begin position="29"/>
        <end position="44"/>
    </location>
</feature>
<feature type="helix" evidence="5">
    <location>
        <begin position="51"/>
        <end position="69"/>
    </location>
</feature>
<feature type="helix" evidence="5">
    <location>
        <begin position="73"/>
        <end position="76"/>
    </location>
</feature>
<feature type="helix" evidence="5">
    <location>
        <begin position="79"/>
        <end position="88"/>
    </location>
</feature>
<feature type="helix" evidence="5">
    <location>
        <begin position="106"/>
        <end position="129"/>
    </location>
</feature>
<feature type="helix" evidence="5">
    <location>
        <begin position="136"/>
        <end position="146"/>
    </location>
</feature>
<feature type="helix" evidence="5">
    <location>
        <begin position="148"/>
        <end position="151"/>
    </location>
</feature>
<feature type="helix" evidence="5">
    <location>
        <begin position="154"/>
        <end position="163"/>
    </location>
</feature>
<feature type="helix" evidence="5">
    <location>
        <begin position="164"/>
        <end position="166"/>
    </location>
</feature>
<feature type="helix" evidence="5">
    <location>
        <begin position="170"/>
        <end position="176"/>
    </location>
</feature>
<feature type="helix" evidence="5">
    <location>
        <begin position="182"/>
        <end position="208"/>
    </location>
</feature>
<feature type="turn" evidence="5">
    <location>
        <begin position="209"/>
        <end position="211"/>
    </location>
</feature>
<protein>
    <recommendedName>
        <fullName evidence="3">Ceramide-1-phosphate transfer protein</fullName>
        <shortName evidence="3">CPTP</shortName>
    </recommendedName>
    <alternativeName>
        <fullName evidence="3">Glycolipid transfer protein domain-containing protein 1</fullName>
    </alternativeName>
</protein>
<proteinExistence type="evidence at protein level"/>
<dbReference type="EMBL" id="AK040664">
    <property type="protein sequence ID" value="BAC30659.1"/>
    <property type="molecule type" value="mRNA"/>
</dbReference>
<dbReference type="EMBL" id="AL670236">
    <property type="status" value="NOT_ANNOTATED_CDS"/>
    <property type="molecule type" value="Genomic_DNA"/>
</dbReference>
<dbReference type="EMBL" id="BC002216">
    <property type="protein sequence ID" value="AAH02216.1"/>
    <property type="molecule type" value="mRNA"/>
</dbReference>
<dbReference type="CCDS" id="CCDS19047.1"/>
<dbReference type="RefSeq" id="NP_077792.2">
    <property type="nucleotide sequence ID" value="NM_024472.4"/>
</dbReference>
<dbReference type="PDB" id="4KBR">
    <property type="method" value="X-ray"/>
    <property type="resolution" value="2.55 A"/>
    <property type="chains" value="A/B/C/D/E/F/G/H=1-216"/>
</dbReference>
<dbReference type="PDBsum" id="4KBR"/>
<dbReference type="SMR" id="Q8BS40"/>
<dbReference type="BioGRID" id="219763">
    <property type="interactions" value="1"/>
</dbReference>
<dbReference type="FunCoup" id="Q8BS40">
    <property type="interactions" value="757"/>
</dbReference>
<dbReference type="STRING" id="10090.ENSMUSP00000030950"/>
<dbReference type="GlyGen" id="Q8BS40">
    <property type="glycosylation" value="1 site"/>
</dbReference>
<dbReference type="PhosphoSitePlus" id="Q8BS40"/>
<dbReference type="SwissPalm" id="Q8BS40"/>
<dbReference type="PaxDb" id="10090-ENSMUSP00000030950"/>
<dbReference type="ProteomicsDB" id="284112"/>
<dbReference type="Pumba" id="Q8BS40"/>
<dbReference type="Antibodypedia" id="66414">
    <property type="antibodies" value="10 antibodies from 7 providers"/>
</dbReference>
<dbReference type="DNASU" id="79554"/>
<dbReference type="Ensembl" id="ENSMUST00000030950.8">
    <property type="protein sequence ID" value="ENSMUSP00000030950.2"/>
    <property type="gene ID" value="ENSMUSG00000029073.10"/>
</dbReference>
<dbReference type="GeneID" id="79554"/>
<dbReference type="KEGG" id="mmu:79554"/>
<dbReference type="UCSC" id="uc008wfg.1">
    <property type="organism name" value="mouse"/>
</dbReference>
<dbReference type="AGR" id="MGI:1933107"/>
<dbReference type="CTD" id="80772"/>
<dbReference type="MGI" id="MGI:1933107">
    <property type="gene designation" value="Cptp"/>
</dbReference>
<dbReference type="VEuPathDB" id="HostDB:ENSMUSG00000029073"/>
<dbReference type="eggNOG" id="KOG4189">
    <property type="taxonomic scope" value="Eukaryota"/>
</dbReference>
<dbReference type="GeneTree" id="ENSGT00940000161763"/>
<dbReference type="HOGENOM" id="CLU_079649_1_0_1"/>
<dbReference type="InParanoid" id="Q8BS40"/>
<dbReference type="OMA" id="ICTDSYN"/>
<dbReference type="OrthoDB" id="116883at2759"/>
<dbReference type="PhylomeDB" id="Q8BS40"/>
<dbReference type="TreeFam" id="TF316097"/>
<dbReference type="Reactome" id="R-MMU-9845576">
    <property type="pathway name" value="Glycosphingolipid transport"/>
</dbReference>
<dbReference type="BioGRID-ORCS" id="79554">
    <property type="hits" value="2 hits in 78 CRISPR screens"/>
</dbReference>
<dbReference type="EvolutionaryTrace" id="Q8BS40"/>
<dbReference type="PRO" id="PR:Q8BS40"/>
<dbReference type="Proteomes" id="UP000000589">
    <property type="component" value="Chromosome 4"/>
</dbReference>
<dbReference type="RNAct" id="Q8BS40">
    <property type="molecule type" value="protein"/>
</dbReference>
<dbReference type="Bgee" id="ENSMUSG00000029073">
    <property type="expression patterns" value="Expressed in spermatid and 238 other cell types or tissues"/>
</dbReference>
<dbReference type="ExpressionAtlas" id="Q8BS40">
    <property type="expression patterns" value="baseline and differential"/>
</dbReference>
<dbReference type="GO" id="GO:0005829">
    <property type="term" value="C:cytosol"/>
    <property type="evidence" value="ECO:0007669"/>
    <property type="project" value="UniProtKB-SubCell"/>
</dbReference>
<dbReference type="GO" id="GO:0010008">
    <property type="term" value="C:endosome membrane"/>
    <property type="evidence" value="ECO:0007669"/>
    <property type="project" value="UniProtKB-SubCell"/>
</dbReference>
<dbReference type="GO" id="GO:0005794">
    <property type="term" value="C:Golgi apparatus"/>
    <property type="evidence" value="ECO:0007669"/>
    <property type="project" value="UniProtKB-SubCell"/>
</dbReference>
<dbReference type="GO" id="GO:0005640">
    <property type="term" value="C:nuclear outer membrane"/>
    <property type="evidence" value="ECO:0007669"/>
    <property type="project" value="UniProtKB-SubCell"/>
</dbReference>
<dbReference type="GO" id="GO:0005886">
    <property type="term" value="C:plasma membrane"/>
    <property type="evidence" value="ECO:0007669"/>
    <property type="project" value="UniProtKB-SubCell"/>
</dbReference>
<dbReference type="GO" id="GO:1902387">
    <property type="term" value="F:ceramide 1-phosphate binding"/>
    <property type="evidence" value="ECO:0000250"/>
    <property type="project" value="UniProtKB"/>
</dbReference>
<dbReference type="GO" id="GO:1902388">
    <property type="term" value="F:ceramide 1-phosphate transfer activity"/>
    <property type="evidence" value="ECO:0000250"/>
    <property type="project" value="UniProtKB"/>
</dbReference>
<dbReference type="GO" id="GO:0005543">
    <property type="term" value="F:phospholipid binding"/>
    <property type="evidence" value="ECO:0000250"/>
    <property type="project" value="UniProtKB"/>
</dbReference>
<dbReference type="GO" id="GO:1902389">
    <property type="term" value="P:ceramide 1-phosphate transport"/>
    <property type="evidence" value="ECO:0000250"/>
    <property type="project" value="UniProtKB"/>
</dbReference>
<dbReference type="GO" id="GO:0010507">
    <property type="term" value="P:negative regulation of autophagy"/>
    <property type="evidence" value="ECO:0007669"/>
    <property type="project" value="Ensembl"/>
</dbReference>
<dbReference type="GO" id="GO:0032691">
    <property type="term" value="P:negative regulation of interleukin-1 beta production"/>
    <property type="evidence" value="ECO:0000315"/>
    <property type="project" value="UniProtKB"/>
</dbReference>
<dbReference type="GO" id="GO:1900226">
    <property type="term" value="P:negative regulation of NLRP3 inflammasome complex assembly"/>
    <property type="evidence" value="ECO:0007669"/>
    <property type="project" value="Ensembl"/>
</dbReference>
<dbReference type="FunFam" id="1.10.3520.10:FF:000002">
    <property type="entry name" value="Ceramide-1-phosphate transfer protein"/>
    <property type="match status" value="1"/>
</dbReference>
<dbReference type="Gene3D" id="1.10.3520.10">
    <property type="entry name" value="Glycolipid transfer protein"/>
    <property type="match status" value="1"/>
</dbReference>
<dbReference type="InterPro" id="IPR036497">
    <property type="entry name" value="GLTP_sf"/>
</dbReference>
<dbReference type="InterPro" id="IPR014830">
    <property type="entry name" value="Glycolipid_transfer_prot_dom"/>
</dbReference>
<dbReference type="PANTHER" id="PTHR10219:SF20">
    <property type="entry name" value="CERAMIDE-1-PHOSPHATE TRANSFER PROTEIN"/>
    <property type="match status" value="1"/>
</dbReference>
<dbReference type="PANTHER" id="PTHR10219">
    <property type="entry name" value="GLYCOLIPID TRANSFER PROTEIN-RELATED"/>
    <property type="match status" value="1"/>
</dbReference>
<dbReference type="Pfam" id="PF08718">
    <property type="entry name" value="GLTP"/>
    <property type="match status" value="1"/>
</dbReference>
<dbReference type="SUPFAM" id="SSF110004">
    <property type="entry name" value="Glycolipid transfer protein, GLTP"/>
    <property type="match status" value="1"/>
</dbReference>
<sequence length="216" mass="24597">MDDSEKDFNLKVVLVSFKQCLTDKGEVLLDHYIAGWKGLVRFLNSLGAVFSFISKDVVAKLQIMERLRSSPQSEHYASLQSMVAYEVSNKLVDMDHRSHPRHPHSGCRTVLRLHRALHWLQLFLDGLRTSSEDARTSTLCSEAYNATLANYHSWIVRQAVTVAFCALPSRKVFLEAMNMESTEQAVEMLGEALPFIEHVYDISQKLYAEHSLLDLP</sequence>